<keyword id="KW-0025">Alternative splicing</keyword>
<keyword id="KW-0114">cAMP</keyword>
<keyword id="KW-0116">cAMP-binding</keyword>
<keyword id="KW-0963">Cytoplasm</keyword>
<keyword id="KW-0547">Nucleotide-binding</keyword>
<keyword id="KW-1267">Proteomics identification</keyword>
<keyword id="KW-1185">Reference proteome</keyword>
<evidence type="ECO:0000250" key="1">
    <source>
        <dbReference type="UniProtKB" id="Q9D5U8"/>
    </source>
</evidence>
<evidence type="ECO:0000269" key="2">
    <source>
    </source>
</evidence>
<evidence type="ECO:0000303" key="3">
    <source>
    </source>
</evidence>
<evidence type="ECO:0000303" key="4">
    <source>
    </source>
</evidence>
<reference key="1">
    <citation type="journal article" date="2004" name="Nat. Genet.">
        <title>Complete sequencing and characterization of 21,243 full-length human cDNAs.</title>
        <authorList>
            <person name="Ota T."/>
            <person name="Suzuki Y."/>
            <person name="Nishikawa T."/>
            <person name="Otsuki T."/>
            <person name="Sugiyama T."/>
            <person name="Irie R."/>
            <person name="Wakamatsu A."/>
            <person name="Hayashi K."/>
            <person name="Sato H."/>
            <person name="Nagai K."/>
            <person name="Kimura K."/>
            <person name="Makita H."/>
            <person name="Sekine M."/>
            <person name="Obayashi M."/>
            <person name="Nishi T."/>
            <person name="Shibahara T."/>
            <person name="Tanaka T."/>
            <person name="Ishii S."/>
            <person name="Yamamoto J."/>
            <person name="Saito K."/>
            <person name="Kawai Y."/>
            <person name="Isono Y."/>
            <person name="Nakamura Y."/>
            <person name="Nagahari K."/>
            <person name="Murakami K."/>
            <person name="Yasuda T."/>
            <person name="Iwayanagi T."/>
            <person name="Wagatsuma M."/>
            <person name="Shiratori A."/>
            <person name="Sudo H."/>
            <person name="Hosoiri T."/>
            <person name="Kaku Y."/>
            <person name="Kodaira H."/>
            <person name="Kondo H."/>
            <person name="Sugawara M."/>
            <person name="Takahashi M."/>
            <person name="Kanda K."/>
            <person name="Yokoi T."/>
            <person name="Furuya T."/>
            <person name="Kikkawa E."/>
            <person name="Omura Y."/>
            <person name="Abe K."/>
            <person name="Kamihara K."/>
            <person name="Katsuta N."/>
            <person name="Sato K."/>
            <person name="Tanikawa M."/>
            <person name="Yamazaki M."/>
            <person name="Ninomiya K."/>
            <person name="Ishibashi T."/>
            <person name="Yamashita H."/>
            <person name="Murakawa K."/>
            <person name="Fujimori K."/>
            <person name="Tanai H."/>
            <person name="Kimata M."/>
            <person name="Watanabe M."/>
            <person name="Hiraoka S."/>
            <person name="Chiba Y."/>
            <person name="Ishida S."/>
            <person name="Ono Y."/>
            <person name="Takiguchi S."/>
            <person name="Watanabe S."/>
            <person name="Yosida M."/>
            <person name="Hotuta T."/>
            <person name="Kusano J."/>
            <person name="Kanehori K."/>
            <person name="Takahashi-Fujii A."/>
            <person name="Hara H."/>
            <person name="Tanase T.-O."/>
            <person name="Nomura Y."/>
            <person name="Togiya S."/>
            <person name="Komai F."/>
            <person name="Hara R."/>
            <person name="Takeuchi K."/>
            <person name="Arita M."/>
            <person name="Imose N."/>
            <person name="Musashino K."/>
            <person name="Yuuki H."/>
            <person name="Oshima A."/>
            <person name="Sasaki N."/>
            <person name="Aotsuka S."/>
            <person name="Yoshikawa Y."/>
            <person name="Matsunawa H."/>
            <person name="Ichihara T."/>
            <person name="Shiohata N."/>
            <person name="Sano S."/>
            <person name="Moriya S."/>
            <person name="Momiyama H."/>
            <person name="Satoh N."/>
            <person name="Takami S."/>
            <person name="Terashima Y."/>
            <person name="Suzuki O."/>
            <person name="Nakagawa S."/>
            <person name="Senoh A."/>
            <person name="Mizoguchi H."/>
            <person name="Goto Y."/>
            <person name="Shimizu F."/>
            <person name="Wakebe H."/>
            <person name="Hishigaki H."/>
            <person name="Watanabe T."/>
            <person name="Sugiyama A."/>
            <person name="Takemoto M."/>
            <person name="Kawakami B."/>
            <person name="Yamazaki M."/>
            <person name="Watanabe K."/>
            <person name="Kumagai A."/>
            <person name="Itakura S."/>
            <person name="Fukuzumi Y."/>
            <person name="Fujimori Y."/>
            <person name="Komiyama M."/>
            <person name="Tashiro H."/>
            <person name="Tanigami A."/>
            <person name="Fujiwara T."/>
            <person name="Ono T."/>
            <person name="Yamada K."/>
            <person name="Fujii Y."/>
            <person name="Ozaki K."/>
            <person name="Hirao M."/>
            <person name="Ohmori Y."/>
            <person name="Kawabata A."/>
            <person name="Hikiji T."/>
            <person name="Kobatake N."/>
            <person name="Inagaki H."/>
            <person name="Ikema Y."/>
            <person name="Okamoto S."/>
            <person name="Okitani R."/>
            <person name="Kawakami T."/>
            <person name="Noguchi S."/>
            <person name="Itoh T."/>
            <person name="Shigeta K."/>
            <person name="Senba T."/>
            <person name="Matsumura K."/>
            <person name="Nakajima Y."/>
            <person name="Mizuno T."/>
            <person name="Morinaga M."/>
            <person name="Sasaki M."/>
            <person name="Togashi T."/>
            <person name="Oyama M."/>
            <person name="Hata H."/>
            <person name="Watanabe M."/>
            <person name="Komatsu T."/>
            <person name="Mizushima-Sugano J."/>
            <person name="Satoh T."/>
            <person name="Shirai Y."/>
            <person name="Takahashi Y."/>
            <person name="Nakagawa K."/>
            <person name="Okumura K."/>
            <person name="Nagase T."/>
            <person name="Nomura N."/>
            <person name="Kikuchi H."/>
            <person name="Masuho Y."/>
            <person name="Yamashita R."/>
            <person name="Nakai K."/>
            <person name="Yada T."/>
            <person name="Nakamura Y."/>
            <person name="Ohara O."/>
            <person name="Isogai T."/>
            <person name="Sugano S."/>
        </authorList>
    </citation>
    <scope>NUCLEOTIDE SEQUENCE [LARGE SCALE MRNA] (ISOFORM 2)</scope>
    <scope>VARIANT SER-375</scope>
    <source>
        <tissue>Testis</tissue>
    </source>
</reference>
<reference key="2">
    <citation type="journal article" date="2001" name="Nature">
        <title>The DNA sequence and comparative analysis of human chromosome 20.</title>
        <authorList>
            <person name="Deloukas P."/>
            <person name="Matthews L.H."/>
            <person name="Ashurst J.L."/>
            <person name="Burton J."/>
            <person name="Gilbert J.G.R."/>
            <person name="Jones M."/>
            <person name="Stavrides G."/>
            <person name="Almeida J.P."/>
            <person name="Babbage A.K."/>
            <person name="Bagguley C.L."/>
            <person name="Bailey J."/>
            <person name="Barlow K.F."/>
            <person name="Bates K.N."/>
            <person name="Beard L.M."/>
            <person name="Beare D.M."/>
            <person name="Beasley O.P."/>
            <person name="Bird C.P."/>
            <person name="Blakey S.E."/>
            <person name="Bridgeman A.M."/>
            <person name="Brown A.J."/>
            <person name="Buck D."/>
            <person name="Burrill W.D."/>
            <person name="Butler A.P."/>
            <person name="Carder C."/>
            <person name="Carter N.P."/>
            <person name="Chapman J.C."/>
            <person name="Clamp M."/>
            <person name="Clark G."/>
            <person name="Clark L.N."/>
            <person name="Clark S.Y."/>
            <person name="Clee C.M."/>
            <person name="Clegg S."/>
            <person name="Cobley V.E."/>
            <person name="Collier R.E."/>
            <person name="Connor R.E."/>
            <person name="Corby N.R."/>
            <person name="Coulson A."/>
            <person name="Coville G.J."/>
            <person name="Deadman R."/>
            <person name="Dhami P.D."/>
            <person name="Dunn M."/>
            <person name="Ellington A.G."/>
            <person name="Frankland J.A."/>
            <person name="Fraser A."/>
            <person name="French L."/>
            <person name="Garner P."/>
            <person name="Grafham D.V."/>
            <person name="Griffiths C."/>
            <person name="Griffiths M.N.D."/>
            <person name="Gwilliam R."/>
            <person name="Hall R.E."/>
            <person name="Hammond S."/>
            <person name="Harley J.L."/>
            <person name="Heath P.D."/>
            <person name="Ho S."/>
            <person name="Holden J.L."/>
            <person name="Howden P.J."/>
            <person name="Huckle E."/>
            <person name="Hunt A.R."/>
            <person name="Hunt S.E."/>
            <person name="Jekosch K."/>
            <person name="Johnson C.M."/>
            <person name="Johnson D."/>
            <person name="Kay M.P."/>
            <person name="Kimberley A.M."/>
            <person name="King A."/>
            <person name="Knights A."/>
            <person name="Laird G.K."/>
            <person name="Lawlor S."/>
            <person name="Lehvaeslaiho M.H."/>
            <person name="Leversha M.A."/>
            <person name="Lloyd C."/>
            <person name="Lloyd D.M."/>
            <person name="Lovell J.D."/>
            <person name="Marsh V.L."/>
            <person name="Martin S.L."/>
            <person name="McConnachie L.J."/>
            <person name="McLay K."/>
            <person name="McMurray A.A."/>
            <person name="Milne S.A."/>
            <person name="Mistry D."/>
            <person name="Moore M.J.F."/>
            <person name="Mullikin J.C."/>
            <person name="Nickerson T."/>
            <person name="Oliver K."/>
            <person name="Parker A."/>
            <person name="Patel R."/>
            <person name="Pearce T.A.V."/>
            <person name="Peck A.I."/>
            <person name="Phillimore B.J.C.T."/>
            <person name="Prathalingam S.R."/>
            <person name="Plumb R.W."/>
            <person name="Ramsay H."/>
            <person name="Rice C.M."/>
            <person name="Ross M.T."/>
            <person name="Scott C.E."/>
            <person name="Sehra H.K."/>
            <person name="Shownkeen R."/>
            <person name="Sims S."/>
            <person name="Skuce C.D."/>
            <person name="Smith M.L."/>
            <person name="Soderlund C."/>
            <person name="Steward C.A."/>
            <person name="Sulston J.E."/>
            <person name="Swann R.M."/>
            <person name="Sycamore N."/>
            <person name="Taylor R."/>
            <person name="Tee L."/>
            <person name="Thomas D.W."/>
            <person name="Thorpe A."/>
            <person name="Tracey A."/>
            <person name="Tromans A.C."/>
            <person name="Vaudin M."/>
            <person name="Wall M."/>
            <person name="Wallis J.M."/>
            <person name="Whitehead S.L."/>
            <person name="Whittaker P."/>
            <person name="Willey D.L."/>
            <person name="Williams L."/>
            <person name="Williams S.A."/>
            <person name="Wilming L."/>
            <person name="Wray P.W."/>
            <person name="Hubbard T."/>
            <person name="Durbin R.M."/>
            <person name="Bentley D.R."/>
            <person name="Beck S."/>
            <person name="Rogers J."/>
        </authorList>
    </citation>
    <scope>NUCLEOTIDE SEQUENCE [LARGE SCALE GENOMIC DNA]</scope>
</reference>
<reference key="3">
    <citation type="submission" date="2005-09" db="EMBL/GenBank/DDBJ databases">
        <authorList>
            <person name="Mural R.J."/>
            <person name="Istrail S."/>
            <person name="Sutton G.G."/>
            <person name="Florea L."/>
            <person name="Halpern A.L."/>
            <person name="Mobarry C.M."/>
            <person name="Lippert R."/>
            <person name="Walenz B."/>
            <person name="Shatkay H."/>
            <person name="Dew I."/>
            <person name="Miller J.R."/>
            <person name="Flanigan M.J."/>
            <person name="Edwards N.J."/>
            <person name="Bolanos R."/>
            <person name="Fasulo D."/>
            <person name="Halldorsson B.V."/>
            <person name="Hannenhalli S."/>
            <person name="Turner R."/>
            <person name="Yooseph S."/>
            <person name="Lu F."/>
            <person name="Nusskern D.R."/>
            <person name="Shue B.C."/>
            <person name="Zheng X.H."/>
            <person name="Zhong F."/>
            <person name="Delcher A.L."/>
            <person name="Huson D.H."/>
            <person name="Kravitz S.A."/>
            <person name="Mouchard L."/>
            <person name="Reinert K."/>
            <person name="Remington K.A."/>
            <person name="Clark A.G."/>
            <person name="Waterman M.S."/>
            <person name="Eichler E.E."/>
            <person name="Adams M.D."/>
            <person name="Hunkapiller M.W."/>
            <person name="Myers E.W."/>
            <person name="Venter J.C."/>
        </authorList>
    </citation>
    <scope>NUCLEOTIDE SEQUENCE [LARGE SCALE GENOMIC DNA]</scope>
</reference>
<reference key="4">
    <citation type="journal article" date="2004" name="Genome Res.">
        <title>The status, quality, and expansion of the NIH full-length cDNA project: the Mammalian Gene Collection (MGC).</title>
        <authorList>
            <consortium name="The MGC Project Team"/>
        </authorList>
    </citation>
    <scope>NUCLEOTIDE SEQUENCE [LARGE SCALE MRNA] (ISOFORM 3)</scope>
</reference>
<feature type="chain" id="PRO_0000079471" description="Cyclic nucleotide-binding domain-containing protein 2">
    <location>
        <begin position="1"/>
        <end position="576"/>
    </location>
</feature>
<feature type="binding site">
    <location>
        <begin position="116"/>
        <end position="239"/>
    </location>
    <ligand>
        <name>a nucleoside 3',5'-cyclic phosphate</name>
        <dbReference type="ChEBI" id="CHEBI:58464"/>
    </ligand>
</feature>
<feature type="splice variant" id="VSP_043858" description="In isoform 3." evidence="4">
    <location>
        <begin position="424"/>
        <end position="576"/>
    </location>
</feature>
<feature type="splice variant" id="VSP_039149" description="In isoform 2." evidence="3">
    <location>
        <begin position="424"/>
        <end position="427"/>
    </location>
</feature>
<feature type="sequence variant" id="VAR_056853" description="In dbSNP:rs17347958.">
    <original>R</original>
    <variation>H</variation>
    <location>
        <position position="37"/>
    </location>
</feature>
<feature type="sequence variant" id="VAR_056854" description="In dbSNP:rs6142471.">
    <original>T</original>
    <variation>A</variation>
    <location>
        <position position="208"/>
    </location>
</feature>
<feature type="sequence variant" id="VAR_056855" description="In dbSNP:rs6060750." evidence="2">
    <original>P</original>
    <variation>S</variation>
    <location>
        <position position="375"/>
    </location>
</feature>
<accession>Q96M20</accession>
<accession>Q14C79</accession>
<accession>Q5JWY7</accession>
<accession>Q5T3S1</accession>
<accession>Q9BR36</accession>
<accession>Q9BWY5</accession>
<gene>
    <name type="primary">CNBD2</name>
    <name type="synonym">C20orf152</name>
</gene>
<proteinExistence type="evidence at protein level"/>
<dbReference type="EMBL" id="AK057454">
    <property type="protein sequence ID" value="BAB71494.1"/>
    <property type="molecule type" value="mRNA"/>
</dbReference>
<dbReference type="EMBL" id="AL109965">
    <property type="status" value="NOT_ANNOTATED_CDS"/>
    <property type="molecule type" value="Genomic_DNA"/>
</dbReference>
<dbReference type="EMBL" id="AL359828">
    <property type="status" value="NOT_ANNOTATED_CDS"/>
    <property type="molecule type" value="Genomic_DNA"/>
</dbReference>
<dbReference type="EMBL" id="CH471077">
    <property type="protein sequence ID" value="EAW76149.1"/>
    <property type="molecule type" value="Genomic_DNA"/>
</dbReference>
<dbReference type="EMBL" id="BC114945">
    <property type="protein sequence ID" value="AAI14946.1"/>
    <property type="molecule type" value="mRNA"/>
</dbReference>
<dbReference type="CCDS" id="CCDS13270.1">
    <molecule id="Q96M20-2"/>
</dbReference>
<dbReference type="CCDS" id="CCDS56189.1">
    <molecule id="Q96M20-3"/>
</dbReference>
<dbReference type="CCDS" id="CCDS93033.1">
    <molecule id="Q96M20-1"/>
</dbReference>
<dbReference type="RefSeq" id="NP_001194005.1">
    <molecule id="Q96M20-3"/>
    <property type="nucleotide sequence ID" value="NM_001207076.3"/>
</dbReference>
<dbReference type="RefSeq" id="NP_001352638.1">
    <molecule id="Q96M20-1"/>
    <property type="nucleotide sequence ID" value="NM_001365709.1"/>
</dbReference>
<dbReference type="RefSeq" id="NP_543024.2">
    <molecule id="Q96M20-2"/>
    <property type="nucleotide sequence ID" value="NM_080834.4"/>
</dbReference>
<dbReference type="RefSeq" id="XP_005260352.1">
    <property type="nucleotide sequence ID" value="XM_005260295.2"/>
</dbReference>
<dbReference type="SMR" id="Q96M20"/>
<dbReference type="FunCoup" id="Q96M20">
    <property type="interactions" value="71"/>
</dbReference>
<dbReference type="STRING" id="9606.ENSP00000340954"/>
<dbReference type="iPTMnet" id="Q96M20"/>
<dbReference type="PhosphoSitePlus" id="Q96M20"/>
<dbReference type="BioMuta" id="CNBD2"/>
<dbReference type="DMDM" id="25089999"/>
<dbReference type="jPOST" id="Q96M20"/>
<dbReference type="MassIVE" id="Q96M20"/>
<dbReference type="PaxDb" id="9606-ENSP00000340954"/>
<dbReference type="PeptideAtlas" id="Q96M20"/>
<dbReference type="ProteomicsDB" id="77281">
    <molecule id="Q96M20-1"/>
</dbReference>
<dbReference type="ProteomicsDB" id="77282">
    <molecule id="Q96M20-2"/>
</dbReference>
<dbReference type="ProteomicsDB" id="77283">
    <molecule id="Q96M20-3"/>
</dbReference>
<dbReference type="Antibodypedia" id="51163">
    <property type="antibodies" value="50 antibodies from 13 providers"/>
</dbReference>
<dbReference type="DNASU" id="140894"/>
<dbReference type="Ensembl" id="ENST00000349339.5">
    <molecule id="Q96M20-2"/>
    <property type="protein sequence ID" value="ENSP00000340954.1"/>
    <property type="gene ID" value="ENSG00000149646.12"/>
</dbReference>
<dbReference type="Ensembl" id="ENST00000373973.7">
    <molecule id="Q96M20-1"/>
    <property type="protein sequence ID" value="ENSP00000363084.3"/>
    <property type="gene ID" value="ENSG00000149646.12"/>
</dbReference>
<dbReference type="Ensembl" id="ENST00000538900.1">
    <molecule id="Q96M20-3"/>
    <property type="protein sequence ID" value="ENSP00000442729.1"/>
    <property type="gene ID" value="ENSG00000149646.12"/>
</dbReference>
<dbReference type="GeneID" id="140894"/>
<dbReference type="KEGG" id="hsa:140894"/>
<dbReference type="MANE-Select" id="ENST00000373973.7">
    <property type="protein sequence ID" value="ENSP00000363084.3"/>
    <property type="RefSeq nucleotide sequence ID" value="NM_001365709.1"/>
    <property type="RefSeq protein sequence ID" value="NP_001352638.1"/>
</dbReference>
<dbReference type="UCSC" id="uc002xer.1">
    <molecule id="Q96M20-1"/>
    <property type="organism name" value="human"/>
</dbReference>
<dbReference type="AGR" id="HGNC:16145"/>
<dbReference type="CTD" id="140894"/>
<dbReference type="DisGeNET" id="140894"/>
<dbReference type="GeneCards" id="CNBD2"/>
<dbReference type="HGNC" id="HGNC:16145">
    <property type="gene designation" value="CNBD2"/>
</dbReference>
<dbReference type="HPA" id="ENSG00000149646">
    <property type="expression patterns" value="Tissue enhanced (testis)"/>
</dbReference>
<dbReference type="neXtProt" id="NX_Q96M20"/>
<dbReference type="OpenTargets" id="ENSG00000149646"/>
<dbReference type="PharmGKB" id="PA25694"/>
<dbReference type="VEuPathDB" id="HostDB:ENSG00000149646"/>
<dbReference type="eggNOG" id="KOG1113">
    <property type="taxonomic scope" value="Eukaryota"/>
</dbReference>
<dbReference type="GeneTree" id="ENSGT00390000003964"/>
<dbReference type="HOGENOM" id="CLU_033437_0_0_1"/>
<dbReference type="InParanoid" id="Q96M20"/>
<dbReference type="OMA" id="KTTKPCY"/>
<dbReference type="OrthoDB" id="166212at2759"/>
<dbReference type="PAN-GO" id="Q96M20">
    <property type="GO annotations" value="2 GO annotations based on evolutionary models"/>
</dbReference>
<dbReference type="PhylomeDB" id="Q96M20"/>
<dbReference type="TreeFam" id="TF326269"/>
<dbReference type="PathwayCommons" id="Q96M20"/>
<dbReference type="BioGRID-ORCS" id="140894">
    <property type="hits" value="16 hits in 1137 CRISPR screens"/>
</dbReference>
<dbReference type="ChiTaRS" id="CNBD2">
    <property type="organism name" value="human"/>
</dbReference>
<dbReference type="GenomeRNAi" id="140894"/>
<dbReference type="Pharos" id="Q96M20">
    <property type="development level" value="Tdark"/>
</dbReference>
<dbReference type="PRO" id="PR:Q96M20"/>
<dbReference type="Proteomes" id="UP000005640">
    <property type="component" value="Chromosome 20"/>
</dbReference>
<dbReference type="RNAct" id="Q96M20">
    <property type="molecule type" value="protein"/>
</dbReference>
<dbReference type="Bgee" id="ENSG00000149646">
    <property type="expression patterns" value="Expressed in sperm and 121 other cell types or tissues"/>
</dbReference>
<dbReference type="ExpressionAtlas" id="Q96M20">
    <property type="expression patterns" value="baseline and differential"/>
</dbReference>
<dbReference type="GO" id="GO:0005829">
    <property type="term" value="C:cytosol"/>
    <property type="evidence" value="ECO:0007669"/>
    <property type="project" value="UniProtKB-SubCell"/>
</dbReference>
<dbReference type="GO" id="GO:0030552">
    <property type="term" value="F:cAMP binding"/>
    <property type="evidence" value="ECO:0000318"/>
    <property type="project" value="GO_Central"/>
</dbReference>
<dbReference type="GO" id="GO:0007283">
    <property type="term" value="P:spermatogenesis"/>
    <property type="evidence" value="ECO:0000318"/>
    <property type="project" value="GO_Central"/>
</dbReference>
<dbReference type="CDD" id="cd00038">
    <property type="entry name" value="CAP_ED"/>
    <property type="match status" value="1"/>
</dbReference>
<dbReference type="FunFam" id="2.60.120.10:FF:000083">
    <property type="entry name" value="Cyclic nucleotide binding domain containing 2"/>
    <property type="match status" value="1"/>
</dbReference>
<dbReference type="FunFam" id="2.60.120.10:FF:000111">
    <property type="entry name" value="Cyclic nucleotide binding domain containing 2"/>
    <property type="match status" value="1"/>
</dbReference>
<dbReference type="Gene3D" id="2.60.120.10">
    <property type="entry name" value="Jelly Rolls"/>
    <property type="match status" value="2"/>
</dbReference>
<dbReference type="InterPro" id="IPR018488">
    <property type="entry name" value="cNMP-bd_CS"/>
</dbReference>
<dbReference type="InterPro" id="IPR000595">
    <property type="entry name" value="cNMP-bd_dom"/>
</dbReference>
<dbReference type="InterPro" id="IPR018490">
    <property type="entry name" value="cNMP-bd_dom_sf"/>
</dbReference>
<dbReference type="InterPro" id="IPR014710">
    <property type="entry name" value="RmlC-like_jellyroll"/>
</dbReference>
<dbReference type="PANTHER" id="PTHR23011">
    <property type="entry name" value="CYCLIC NUCLEOTIDE-BINDING DOMAIN CONTAINING PROTEIN"/>
    <property type="match status" value="1"/>
</dbReference>
<dbReference type="PANTHER" id="PTHR23011:SF43">
    <property type="entry name" value="CYCLIC NUCLEOTIDE-BINDING DOMAIN-CONTAINING PROTEIN 2"/>
    <property type="match status" value="1"/>
</dbReference>
<dbReference type="Pfam" id="PF00027">
    <property type="entry name" value="cNMP_binding"/>
    <property type="match status" value="1"/>
</dbReference>
<dbReference type="SMART" id="SM00100">
    <property type="entry name" value="cNMP"/>
    <property type="match status" value="1"/>
</dbReference>
<dbReference type="SUPFAM" id="SSF51206">
    <property type="entry name" value="cAMP-binding domain-like"/>
    <property type="match status" value="2"/>
</dbReference>
<dbReference type="PROSITE" id="PS00888">
    <property type="entry name" value="CNMP_BINDING_1"/>
    <property type="match status" value="1"/>
</dbReference>
<dbReference type="PROSITE" id="PS50042">
    <property type="entry name" value="CNMP_BINDING_3"/>
    <property type="match status" value="1"/>
</dbReference>
<protein>
    <recommendedName>
        <fullName>Cyclic nucleotide-binding domain-containing protein 2</fullName>
    </recommendedName>
</protein>
<comment type="function">
    <text evidence="1">Essential for male fertility. Plays an important role in spermatogenesis and regulates sperm motility by controlling the development of the flagellar bending of sperm.</text>
</comment>
<comment type="subcellular location">
    <subcellularLocation>
        <location evidence="1">Cytoplasm</location>
        <location evidence="1">Cytosol</location>
    </subcellularLocation>
</comment>
<comment type="alternative products">
    <event type="alternative splicing"/>
    <isoform>
        <id>Q96M20-1</id>
        <name>1</name>
        <sequence type="displayed"/>
    </isoform>
    <isoform>
        <id>Q96M20-2</id>
        <name>2</name>
        <sequence type="described" ref="VSP_039149"/>
    </isoform>
    <isoform>
        <id>Q96M20-3</id>
        <name>3</name>
        <sequence type="described" ref="VSP_043858"/>
    </isoform>
</comment>
<sequence length="576" mass="67512">MRRHMVTYAWQLLKKELGLYQLAMDIIIMIRVCKMFRQGLRGFREYQIIETAHWKHPIFSFWDKKMQSRVTFDTMDFIAEEGHFPPKAIQIMQKKPSWRTEDEIQAVCNILQVLDSYRNYAEPLQLLLAKVMRFERFGRRRVIIKKGQKGNSFYFIYLGTVAITKDEDGSSAFLDPHPKLLHKGSCFGEMDVLHASVRRSTIVCMEETEFLVVDREDFFANKLDQEVQKDAQYRFEFFRKMELFASWSDEKLWQLVAMAKIERFSYGQLISKDFGESPFIMFISKGSCEVLRLLDLGASPSYRRWIWQHLELIDGRPLKTHLSEYSPMERFKEFQIKSYPLQDFSSLKLPHLKKAWGLQGTSFSRKIRTSGDTLPKMLGPKIQSRPAQSIKCAMINIKPGELPKEAAVGAYVKVHTVEQGEILGLHQAFLPEGECDTRPLILMSLGNELIRIRKEIFYELIDNDDEMIKKLLKLNIAFPSDEDMCQKFLQQNSWNIFRKDLLQLLVEPCQSQLFTPNRPKKREIYNPKSVVLDLCSINKTTKPRYPIFMAPQKYLPPLRIVQAIKAPRYKIRELLA</sequence>
<organism>
    <name type="scientific">Homo sapiens</name>
    <name type="common">Human</name>
    <dbReference type="NCBI Taxonomy" id="9606"/>
    <lineage>
        <taxon>Eukaryota</taxon>
        <taxon>Metazoa</taxon>
        <taxon>Chordata</taxon>
        <taxon>Craniata</taxon>
        <taxon>Vertebrata</taxon>
        <taxon>Euteleostomi</taxon>
        <taxon>Mammalia</taxon>
        <taxon>Eutheria</taxon>
        <taxon>Euarchontoglires</taxon>
        <taxon>Primates</taxon>
        <taxon>Haplorrhini</taxon>
        <taxon>Catarrhini</taxon>
        <taxon>Hominidae</taxon>
        <taxon>Homo</taxon>
    </lineage>
</organism>
<name>CNBD2_HUMAN</name>